<sequence>MGKYFGTDGVRGVANSELTPELAFKLGRFGGYVLAHNGTEKPTVVVGRDTRISGVMLESALVAGLLSTGAEVMRLGVITTPGVAYLTREMNAQAGVMISASHNPVQDNGIKFFGADGFKLSDAQEAEIEALLDAEEDTLPRPVGVELGHTSDYFEGGHRYLSYLKSTIEGDLEGLKIALDGAHGSTYSLAPYLFGDLEADTVTIGCNPDGNNINDGVGSTHPEKLAELVLDTDSDFGLAFDGDGDRLIAVDEQGQIVDGDQIMFILAQDMDARGELKDHMVVSTVMSNLGFYKGLESLNIKSDKTKVGDRYVVEEMRRSSYNLGGEQSGHIVMMDHNTTGDGLLTGIHLASIVKRSGKTLSELAGQMTKYPQRLVNIKVSDKHAVEQNEHVAAVIKEVEDEMNGEGRVLVRPSGTEPLVRVMVEAKTDEDAERFVNKISDVVRAHMGL</sequence>
<proteinExistence type="inferred from homology"/>
<reference key="1">
    <citation type="journal article" date="2009" name="J. Bacteriol.">
        <title>Complete genome sequence of Macrococcus caseolyticus strain JCSCS5402, reflecting the ancestral genome of the human-pathogenic staphylococci.</title>
        <authorList>
            <person name="Baba T."/>
            <person name="Kuwahara-Arai K."/>
            <person name="Uchiyama I."/>
            <person name="Takeuchi F."/>
            <person name="Ito T."/>
            <person name="Hiramatsu K."/>
        </authorList>
    </citation>
    <scope>NUCLEOTIDE SEQUENCE [LARGE SCALE GENOMIC DNA]</scope>
    <source>
        <strain>JCSC5402</strain>
    </source>
</reference>
<keyword id="KW-0413">Isomerase</keyword>
<keyword id="KW-0460">Magnesium</keyword>
<keyword id="KW-0479">Metal-binding</keyword>
<keyword id="KW-0597">Phosphoprotein</keyword>
<keyword id="KW-1185">Reference proteome</keyword>
<feature type="chain" id="PRO_1000185372" description="Phosphoglucosamine mutase">
    <location>
        <begin position="1"/>
        <end position="448"/>
    </location>
</feature>
<feature type="active site" description="Phosphoserine intermediate" evidence="1">
    <location>
        <position position="101"/>
    </location>
</feature>
<feature type="binding site" description="via phosphate group" evidence="1">
    <location>
        <position position="101"/>
    </location>
    <ligand>
        <name>Mg(2+)</name>
        <dbReference type="ChEBI" id="CHEBI:18420"/>
    </ligand>
</feature>
<feature type="binding site" evidence="1">
    <location>
        <position position="241"/>
    </location>
    <ligand>
        <name>Mg(2+)</name>
        <dbReference type="ChEBI" id="CHEBI:18420"/>
    </ligand>
</feature>
<feature type="binding site" evidence="1">
    <location>
        <position position="243"/>
    </location>
    <ligand>
        <name>Mg(2+)</name>
        <dbReference type="ChEBI" id="CHEBI:18420"/>
    </ligand>
</feature>
<feature type="binding site" evidence="1">
    <location>
        <position position="245"/>
    </location>
    <ligand>
        <name>Mg(2+)</name>
        <dbReference type="ChEBI" id="CHEBI:18420"/>
    </ligand>
</feature>
<feature type="modified residue" description="Phosphoserine" evidence="1">
    <location>
        <position position="101"/>
    </location>
</feature>
<dbReference type="EC" id="5.4.2.10" evidence="1"/>
<dbReference type="EMBL" id="AP009484">
    <property type="protein sequence ID" value="BAH17030.1"/>
    <property type="molecule type" value="Genomic_DNA"/>
</dbReference>
<dbReference type="RefSeq" id="WP_012656231.1">
    <property type="nucleotide sequence ID" value="NC_011999.1"/>
</dbReference>
<dbReference type="SMR" id="B9E9W9"/>
<dbReference type="STRING" id="458233.MCCL_0323"/>
<dbReference type="KEGG" id="mcl:MCCL_0323"/>
<dbReference type="eggNOG" id="COG1109">
    <property type="taxonomic scope" value="Bacteria"/>
</dbReference>
<dbReference type="HOGENOM" id="CLU_016950_7_0_9"/>
<dbReference type="OrthoDB" id="9806956at2"/>
<dbReference type="Proteomes" id="UP000001383">
    <property type="component" value="Chromosome"/>
</dbReference>
<dbReference type="GO" id="GO:0005829">
    <property type="term" value="C:cytosol"/>
    <property type="evidence" value="ECO:0007669"/>
    <property type="project" value="TreeGrafter"/>
</dbReference>
<dbReference type="GO" id="GO:0000287">
    <property type="term" value="F:magnesium ion binding"/>
    <property type="evidence" value="ECO:0007669"/>
    <property type="project" value="UniProtKB-UniRule"/>
</dbReference>
<dbReference type="GO" id="GO:0008966">
    <property type="term" value="F:phosphoglucosamine mutase activity"/>
    <property type="evidence" value="ECO:0007669"/>
    <property type="project" value="UniProtKB-UniRule"/>
</dbReference>
<dbReference type="GO" id="GO:0004615">
    <property type="term" value="F:phosphomannomutase activity"/>
    <property type="evidence" value="ECO:0007669"/>
    <property type="project" value="TreeGrafter"/>
</dbReference>
<dbReference type="GO" id="GO:0005975">
    <property type="term" value="P:carbohydrate metabolic process"/>
    <property type="evidence" value="ECO:0007669"/>
    <property type="project" value="InterPro"/>
</dbReference>
<dbReference type="GO" id="GO:0009252">
    <property type="term" value="P:peptidoglycan biosynthetic process"/>
    <property type="evidence" value="ECO:0007669"/>
    <property type="project" value="TreeGrafter"/>
</dbReference>
<dbReference type="GO" id="GO:0006048">
    <property type="term" value="P:UDP-N-acetylglucosamine biosynthetic process"/>
    <property type="evidence" value="ECO:0007669"/>
    <property type="project" value="TreeGrafter"/>
</dbReference>
<dbReference type="CDD" id="cd05802">
    <property type="entry name" value="GlmM"/>
    <property type="match status" value="1"/>
</dbReference>
<dbReference type="FunFam" id="3.30.310.50:FF:000001">
    <property type="entry name" value="Phosphoglucosamine mutase"/>
    <property type="match status" value="1"/>
</dbReference>
<dbReference type="FunFam" id="3.40.120.10:FF:000001">
    <property type="entry name" value="Phosphoglucosamine mutase"/>
    <property type="match status" value="1"/>
</dbReference>
<dbReference type="FunFam" id="3.40.120.10:FF:000002">
    <property type="entry name" value="Phosphoglucosamine mutase"/>
    <property type="match status" value="1"/>
</dbReference>
<dbReference type="Gene3D" id="3.40.120.10">
    <property type="entry name" value="Alpha-D-Glucose-1,6-Bisphosphate, subunit A, domain 3"/>
    <property type="match status" value="3"/>
</dbReference>
<dbReference type="Gene3D" id="3.30.310.50">
    <property type="entry name" value="Alpha-D-phosphohexomutase, C-terminal domain"/>
    <property type="match status" value="1"/>
</dbReference>
<dbReference type="HAMAP" id="MF_01554_B">
    <property type="entry name" value="GlmM_B"/>
    <property type="match status" value="1"/>
</dbReference>
<dbReference type="InterPro" id="IPR005844">
    <property type="entry name" value="A-D-PHexomutase_a/b/a-I"/>
</dbReference>
<dbReference type="InterPro" id="IPR016055">
    <property type="entry name" value="A-D-PHexomutase_a/b/a-I/II/III"/>
</dbReference>
<dbReference type="InterPro" id="IPR005845">
    <property type="entry name" value="A-D-PHexomutase_a/b/a-II"/>
</dbReference>
<dbReference type="InterPro" id="IPR005846">
    <property type="entry name" value="A-D-PHexomutase_a/b/a-III"/>
</dbReference>
<dbReference type="InterPro" id="IPR005843">
    <property type="entry name" value="A-D-PHexomutase_C"/>
</dbReference>
<dbReference type="InterPro" id="IPR036900">
    <property type="entry name" value="A-D-PHexomutase_C_sf"/>
</dbReference>
<dbReference type="InterPro" id="IPR016066">
    <property type="entry name" value="A-D-PHexomutase_CS"/>
</dbReference>
<dbReference type="InterPro" id="IPR005841">
    <property type="entry name" value="Alpha-D-phosphohexomutase_SF"/>
</dbReference>
<dbReference type="InterPro" id="IPR006352">
    <property type="entry name" value="GlmM_bact"/>
</dbReference>
<dbReference type="InterPro" id="IPR050060">
    <property type="entry name" value="Phosphoglucosamine_mutase"/>
</dbReference>
<dbReference type="NCBIfam" id="TIGR01455">
    <property type="entry name" value="glmM"/>
    <property type="match status" value="1"/>
</dbReference>
<dbReference type="NCBIfam" id="NF008139">
    <property type="entry name" value="PRK10887.1"/>
    <property type="match status" value="1"/>
</dbReference>
<dbReference type="PANTHER" id="PTHR42946:SF1">
    <property type="entry name" value="PHOSPHOGLUCOMUTASE (ALPHA-D-GLUCOSE-1,6-BISPHOSPHATE-DEPENDENT)"/>
    <property type="match status" value="1"/>
</dbReference>
<dbReference type="PANTHER" id="PTHR42946">
    <property type="entry name" value="PHOSPHOHEXOSE MUTASE"/>
    <property type="match status" value="1"/>
</dbReference>
<dbReference type="Pfam" id="PF02878">
    <property type="entry name" value="PGM_PMM_I"/>
    <property type="match status" value="1"/>
</dbReference>
<dbReference type="Pfam" id="PF02879">
    <property type="entry name" value="PGM_PMM_II"/>
    <property type="match status" value="1"/>
</dbReference>
<dbReference type="Pfam" id="PF02880">
    <property type="entry name" value="PGM_PMM_III"/>
    <property type="match status" value="1"/>
</dbReference>
<dbReference type="Pfam" id="PF00408">
    <property type="entry name" value="PGM_PMM_IV"/>
    <property type="match status" value="1"/>
</dbReference>
<dbReference type="PRINTS" id="PR00509">
    <property type="entry name" value="PGMPMM"/>
</dbReference>
<dbReference type="SUPFAM" id="SSF55957">
    <property type="entry name" value="Phosphoglucomutase, C-terminal domain"/>
    <property type="match status" value="1"/>
</dbReference>
<dbReference type="SUPFAM" id="SSF53738">
    <property type="entry name" value="Phosphoglucomutase, first 3 domains"/>
    <property type="match status" value="3"/>
</dbReference>
<dbReference type="PROSITE" id="PS00710">
    <property type="entry name" value="PGM_PMM"/>
    <property type="match status" value="1"/>
</dbReference>
<evidence type="ECO:0000255" key="1">
    <source>
        <dbReference type="HAMAP-Rule" id="MF_01554"/>
    </source>
</evidence>
<protein>
    <recommendedName>
        <fullName evidence="1">Phosphoglucosamine mutase</fullName>
        <ecNumber evidence="1">5.4.2.10</ecNumber>
    </recommendedName>
</protein>
<organism>
    <name type="scientific">Macrococcus caseolyticus (strain JCSC5402)</name>
    <name type="common">Macrococcoides caseolyticum</name>
    <dbReference type="NCBI Taxonomy" id="458233"/>
    <lineage>
        <taxon>Bacteria</taxon>
        <taxon>Bacillati</taxon>
        <taxon>Bacillota</taxon>
        <taxon>Bacilli</taxon>
        <taxon>Bacillales</taxon>
        <taxon>Staphylococcaceae</taxon>
        <taxon>Macrococcoides</taxon>
    </lineage>
</organism>
<accession>B9E9W9</accession>
<comment type="function">
    <text evidence="1">Catalyzes the conversion of glucosamine-6-phosphate to glucosamine-1-phosphate.</text>
</comment>
<comment type="catalytic activity">
    <reaction evidence="1">
        <text>alpha-D-glucosamine 1-phosphate = D-glucosamine 6-phosphate</text>
        <dbReference type="Rhea" id="RHEA:23424"/>
        <dbReference type="ChEBI" id="CHEBI:58516"/>
        <dbReference type="ChEBI" id="CHEBI:58725"/>
        <dbReference type="EC" id="5.4.2.10"/>
    </reaction>
</comment>
<comment type="cofactor">
    <cofactor evidence="1">
        <name>Mg(2+)</name>
        <dbReference type="ChEBI" id="CHEBI:18420"/>
    </cofactor>
    <text evidence="1">Binds 1 Mg(2+) ion per subunit.</text>
</comment>
<comment type="PTM">
    <text evidence="1">Activated by phosphorylation.</text>
</comment>
<comment type="similarity">
    <text evidence="1">Belongs to the phosphohexose mutase family.</text>
</comment>
<name>GLMM_MACCJ</name>
<gene>
    <name evidence="1" type="primary">glmM</name>
    <name type="ordered locus">MCCL_0323</name>
</gene>